<sequence length="815" mass="91321">MINLKLFLELKLCFLITLLCSSHISSVSDTFFINCGSPTNVTVNNRTFVSDNNLVQGFSVGTTDSNSGDESTLFQTARVFSDESSSTYRFPIEEHGWFLIRIYFLPLVSASQDLTTARFSVSAQNFTLIREYKPSTTSVVREYILNVTTDSLLLQFLPRTGSVSFINALEVLRLPETLIPEDAKLIGTQKDLKLSSHAMETVSRVNMGNLSVSRDQDKLWRQWDSDSAYKAHFGTPVMNLKAVNFSAGGITDDIAPVYVYGTATRLNSDLDPNTNANLTWTFKVEPGFDYFVRFHFCNIIVDPFGFERQIRFDIFVNSEKVRTIDMTEVLNGTFGAPFFVDAVMRKAKSREGFLNLSIGLVMDVSSYPVSFINGFEISKLSNDKRSLDAFDAILPDGSSSNKSSNTSVGLIAGLSAALCVALVFGVVVSWWCIRKRRRRNRQMQTVHSRGDDHQIKKNETGESLIFSSSKIGYRYPLALIKEATDDFDESLVIGVGGFGKVYKGVLRDKTEVAVKRGAPQSRQGLAEFKTEVEMLTQFRHRHLVSLIGYCDENSEMIIVYEYMEKGTLKDHLYDLDDKPRLSWRQRLEICVGAARGLHYLHTGSTRAIIHRDVKSANILLDDNFMAKVADFGLSKTGPDLDQTHVSTAVKGSFGYLDPEYLTRQQLTEKSDVYSFGVVMLEVVCGRPVIDPSLPREKVNLIEWAMKLVKKGKLEDIIDPFLVGKVKLEEVKKYCEVTEKCLSQNGIERPAMGDLLWNLEFMLQVQAKDEKAAMVDDKPEASVVGSTMQFSVNGVGDIAGVSMSKVFAQMVREETR</sequence>
<dbReference type="EC" id="2.7.11.-"/>
<dbReference type="EMBL" id="AC004218">
    <property type="protein sequence ID" value="AAC27827.1"/>
    <property type="molecule type" value="Genomic_DNA"/>
</dbReference>
<dbReference type="EMBL" id="CP002685">
    <property type="protein sequence ID" value="AEC09665.1"/>
    <property type="molecule type" value="Genomic_DNA"/>
</dbReference>
<dbReference type="EMBL" id="AF325084">
    <property type="protein sequence ID" value="AAK17152.1"/>
    <property type="molecule type" value="mRNA"/>
</dbReference>
<dbReference type="PIR" id="T00546">
    <property type="entry name" value="T00546"/>
</dbReference>
<dbReference type="RefSeq" id="NP_181468.1">
    <property type="nucleotide sequence ID" value="NM_129493.3"/>
</dbReference>
<dbReference type="SMR" id="O80623"/>
<dbReference type="BioGRID" id="3859">
    <property type="interactions" value="15"/>
</dbReference>
<dbReference type="IntAct" id="O80623">
    <property type="interactions" value="15"/>
</dbReference>
<dbReference type="STRING" id="3702.O80623"/>
<dbReference type="GlyGen" id="O80623">
    <property type="glycosylation" value="11 sites"/>
</dbReference>
<dbReference type="iPTMnet" id="O80623"/>
<dbReference type="PaxDb" id="3702-AT2G39360.1"/>
<dbReference type="ProteomicsDB" id="243146"/>
<dbReference type="EnsemblPlants" id="AT2G39360.1">
    <property type="protein sequence ID" value="AT2G39360.1"/>
    <property type="gene ID" value="AT2G39360"/>
</dbReference>
<dbReference type="GeneID" id="818521"/>
<dbReference type="Gramene" id="AT2G39360.1">
    <property type="protein sequence ID" value="AT2G39360.1"/>
    <property type="gene ID" value="AT2G39360"/>
</dbReference>
<dbReference type="KEGG" id="ath:AT2G39360"/>
<dbReference type="Araport" id="AT2G39360"/>
<dbReference type="TAIR" id="AT2G39360">
    <property type="gene designation" value="CVY1"/>
</dbReference>
<dbReference type="eggNOG" id="KOG1187">
    <property type="taxonomic scope" value="Eukaryota"/>
</dbReference>
<dbReference type="HOGENOM" id="CLU_000288_42_2_1"/>
<dbReference type="InParanoid" id="O80623"/>
<dbReference type="OMA" id="LVEWAMK"/>
<dbReference type="PhylomeDB" id="O80623"/>
<dbReference type="PRO" id="PR:O80623"/>
<dbReference type="Proteomes" id="UP000006548">
    <property type="component" value="Chromosome 2"/>
</dbReference>
<dbReference type="ExpressionAtlas" id="O80623">
    <property type="expression patterns" value="baseline and differential"/>
</dbReference>
<dbReference type="GO" id="GO:0005794">
    <property type="term" value="C:Golgi apparatus"/>
    <property type="evidence" value="ECO:0007005"/>
    <property type="project" value="TAIR"/>
</dbReference>
<dbReference type="GO" id="GO:0005886">
    <property type="term" value="C:plasma membrane"/>
    <property type="evidence" value="ECO:0007005"/>
    <property type="project" value="TAIR"/>
</dbReference>
<dbReference type="GO" id="GO:0099503">
    <property type="term" value="C:secretory vesicle"/>
    <property type="evidence" value="ECO:0007005"/>
    <property type="project" value="TAIR"/>
</dbReference>
<dbReference type="GO" id="GO:0005524">
    <property type="term" value="F:ATP binding"/>
    <property type="evidence" value="ECO:0007669"/>
    <property type="project" value="UniProtKB-KW"/>
</dbReference>
<dbReference type="GO" id="GO:0004674">
    <property type="term" value="F:protein serine/threonine kinase activity"/>
    <property type="evidence" value="ECO:0007669"/>
    <property type="project" value="UniProtKB-KW"/>
</dbReference>
<dbReference type="CDD" id="cd14066">
    <property type="entry name" value="STKc_IRAK"/>
    <property type="match status" value="1"/>
</dbReference>
<dbReference type="FunFam" id="2.60.120.430:FF:000005">
    <property type="entry name" value="Putative receptor-like protein kinase"/>
    <property type="match status" value="1"/>
</dbReference>
<dbReference type="FunFam" id="2.60.120.430:FF:000013">
    <property type="entry name" value="Putative receptor-like protein kinase"/>
    <property type="match status" value="1"/>
</dbReference>
<dbReference type="FunFam" id="1.10.510.10:FF:000252">
    <property type="entry name" value="Receptor-like protein kinase FERONIA"/>
    <property type="match status" value="1"/>
</dbReference>
<dbReference type="FunFam" id="3.30.200.20:FF:000039">
    <property type="entry name" value="receptor-like protein kinase FERONIA"/>
    <property type="match status" value="1"/>
</dbReference>
<dbReference type="Gene3D" id="2.60.120.430">
    <property type="entry name" value="Galactose-binding lectin"/>
    <property type="match status" value="2"/>
</dbReference>
<dbReference type="Gene3D" id="3.30.200.20">
    <property type="entry name" value="Phosphorylase Kinase, domain 1"/>
    <property type="match status" value="1"/>
</dbReference>
<dbReference type="Gene3D" id="1.10.510.10">
    <property type="entry name" value="Transferase(Phosphotransferase) domain 1"/>
    <property type="match status" value="1"/>
</dbReference>
<dbReference type="InterPro" id="IPR011009">
    <property type="entry name" value="Kinase-like_dom_sf"/>
</dbReference>
<dbReference type="InterPro" id="IPR024788">
    <property type="entry name" value="Malectin-like_Carb-bd_dom"/>
</dbReference>
<dbReference type="InterPro" id="IPR000719">
    <property type="entry name" value="Prot_kinase_dom"/>
</dbReference>
<dbReference type="InterPro" id="IPR017441">
    <property type="entry name" value="Protein_kinase_ATP_BS"/>
</dbReference>
<dbReference type="InterPro" id="IPR001245">
    <property type="entry name" value="Ser-Thr/Tyr_kinase_cat_dom"/>
</dbReference>
<dbReference type="InterPro" id="IPR008271">
    <property type="entry name" value="Ser/Thr_kinase_AS"/>
</dbReference>
<dbReference type="InterPro" id="IPR024171">
    <property type="entry name" value="SRK-like_kinase"/>
</dbReference>
<dbReference type="PANTHER" id="PTHR45631">
    <property type="entry name" value="OS07G0107800 PROTEIN-RELATED"/>
    <property type="match status" value="1"/>
</dbReference>
<dbReference type="Pfam" id="PF12819">
    <property type="entry name" value="Malectin_like"/>
    <property type="match status" value="1"/>
</dbReference>
<dbReference type="Pfam" id="PF07714">
    <property type="entry name" value="PK_Tyr_Ser-Thr"/>
    <property type="match status" value="1"/>
</dbReference>
<dbReference type="PIRSF" id="PIRSF000641">
    <property type="entry name" value="SRK"/>
    <property type="match status" value="1"/>
</dbReference>
<dbReference type="SMART" id="SM00220">
    <property type="entry name" value="S_TKc"/>
    <property type="match status" value="1"/>
</dbReference>
<dbReference type="SUPFAM" id="SSF56112">
    <property type="entry name" value="Protein kinase-like (PK-like)"/>
    <property type="match status" value="1"/>
</dbReference>
<dbReference type="PROSITE" id="PS00107">
    <property type="entry name" value="PROTEIN_KINASE_ATP"/>
    <property type="match status" value="1"/>
</dbReference>
<dbReference type="PROSITE" id="PS50011">
    <property type="entry name" value="PROTEIN_KINASE_DOM"/>
    <property type="match status" value="1"/>
</dbReference>
<dbReference type="PROSITE" id="PS00108">
    <property type="entry name" value="PROTEIN_KINASE_ST"/>
    <property type="match status" value="1"/>
</dbReference>
<name>Y2393_ARATH</name>
<evidence type="ECO:0000255" key="1"/>
<evidence type="ECO:0000255" key="2">
    <source>
        <dbReference type="PROSITE-ProRule" id="PRU00159"/>
    </source>
</evidence>
<evidence type="ECO:0000255" key="3">
    <source>
        <dbReference type="PROSITE-ProRule" id="PRU10027"/>
    </source>
</evidence>
<evidence type="ECO:0000305" key="4">
    <source>
    </source>
</evidence>
<organism>
    <name type="scientific">Arabidopsis thaliana</name>
    <name type="common">Mouse-ear cress</name>
    <dbReference type="NCBI Taxonomy" id="3702"/>
    <lineage>
        <taxon>Eukaryota</taxon>
        <taxon>Viridiplantae</taxon>
        <taxon>Streptophyta</taxon>
        <taxon>Embryophyta</taxon>
        <taxon>Tracheophyta</taxon>
        <taxon>Spermatophyta</taxon>
        <taxon>Magnoliopsida</taxon>
        <taxon>eudicotyledons</taxon>
        <taxon>Gunneridae</taxon>
        <taxon>Pentapetalae</taxon>
        <taxon>rosids</taxon>
        <taxon>malvids</taxon>
        <taxon>Brassicales</taxon>
        <taxon>Brassicaceae</taxon>
        <taxon>Camelineae</taxon>
        <taxon>Arabidopsis</taxon>
    </lineage>
</organism>
<protein>
    <recommendedName>
        <fullName>Probable receptor-like protein kinase At2g39360</fullName>
        <ecNumber>2.7.11.-</ecNumber>
    </recommendedName>
</protein>
<keyword id="KW-0067">ATP-binding</keyword>
<keyword id="KW-1003">Cell membrane</keyword>
<keyword id="KW-0325">Glycoprotein</keyword>
<keyword id="KW-0418">Kinase</keyword>
<keyword id="KW-0472">Membrane</keyword>
<keyword id="KW-0547">Nucleotide-binding</keyword>
<keyword id="KW-1185">Reference proteome</keyword>
<keyword id="KW-0723">Serine/threonine-protein kinase</keyword>
<keyword id="KW-0732">Signal</keyword>
<keyword id="KW-0808">Transferase</keyword>
<keyword id="KW-0812">Transmembrane</keyword>
<keyword id="KW-1133">Transmembrane helix</keyword>
<gene>
    <name type="ordered locus">At2g39360</name>
    <name type="ORF">F12L6.2</name>
</gene>
<feature type="signal peptide" evidence="1">
    <location>
        <begin position="1"/>
        <end position="26"/>
    </location>
</feature>
<feature type="chain" id="PRO_0000386554" description="Probable receptor-like protein kinase At2g39360">
    <location>
        <begin position="27"/>
        <end position="815"/>
    </location>
</feature>
<feature type="topological domain" description="Extracellular" evidence="1">
    <location>
        <begin position="27"/>
        <end position="407"/>
    </location>
</feature>
<feature type="transmembrane region" description="Helical" evidence="1">
    <location>
        <begin position="408"/>
        <end position="428"/>
    </location>
</feature>
<feature type="topological domain" description="Cytoplasmic" evidence="1">
    <location>
        <begin position="429"/>
        <end position="815"/>
    </location>
</feature>
<feature type="domain" description="Protein kinase" evidence="2">
    <location>
        <begin position="487"/>
        <end position="761"/>
    </location>
</feature>
<feature type="active site" description="Proton acceptor" evidence="2 3">
    <location>
        <position position="612"/>
    </location>
</feature>
<feature type="binding site" evidence="2">
    <location>
        <begin position="493"/>
        <end position="501"/>
    </location>
    <ligand>
        <name>ATP</name>
        <dbReference type="ChEBI" id="CHEBI:30616"/>
    </ligand>
</feature>
<feature type="binding site" evidence="2">
    <location>
        <position position="515"/>
    </location>
    <ligand>
        <name>ATP</name>
        <dbReference type="ChEBI" id="CHEBI:30616"/>
    </ligand>
</feature>
<feature type="glycosylation site" description="N-linked (GlcNAc...) asparagine" evidence="1">
    <location>
        <position position="40"/>
    </location>
</feature>
<feature type="glycosylation site" description="N-linked (GlcNAc...) asparagine" evidence="1">
    <location>
        <position position="45"/>
    </location>
</feature>
<feature type="glycosylation site" description="N-linked (GlcNAc...) asparagine" evidence="1">
    <location>
        <position position="125"/>
    </location>
</feature>
<feature type="glycosylation site" description="N-linked (GlcNAc...) asparagine" evidence="1">
    <location>
        <position position="146"/>
    </location>
</feature>
<feature type="glycosylation site" description="N-linked (GlcNAc...) asparagine" evidence="1">
    <location>
        <position position="209"/>
    </location>
</feature>
<feature type="glycosylation site" description="N-linked (GlcNAc...) asparagine" evidence="1">
    <location>
        <position position="244"/>
    </location>
</feature>
<feature type="glycosylation site" description="N-linked (GlcNAc...) asparagine" evidence="1">
    <location>
        <position position="277"/>
    </location>
</feature>
<feature type="glycosylation site" description="N-linked (GlcNAc...) asparagine" evidence="1">
    <location>
        <position position="331"/>
    </location>
</feature>
<feature type="glycosylation site" description="N-linked (GlcNAc...) asparagine" evidence="1">
    <location>
        <position position="355"/>
    </location>
</feature>
<feature type="glycosylation site" description="N-linked (GlcNAc...) asparagine" evidence="1">
    <location>
        <position position="401"/>
    </location>
</feature>
<feature type="glycosylation site" description="N-linked (GlcNAc...) asparagine" evidence="1">
    <location>
        <position position="405"/>
    </location>
</feature>
<accession>O80623</accession>
<comment type="subcellular location">
    <subcellularLocation>
        <location evidence="4">Cell membrane</location>
        <topology evidence="4">Single-pass type I membrane protein</topology>
    </subcellularLocation>
</comment>
<comment type="similarity">
    <text evidence="2">Belongs to the protein kinase superfamily. Ser/Thr protein kinase family.</text>
</comment>
<proteinExistence type="evidence at protein level"/>
<reference key="1">
    <citation type="journal article" date="1999" name="Nature">
        <title>Sequence and analysis of chromosome 2 of the plant Arabidopsis thaliana.</title>
        <authorList>
            <person name="Lin X."/>
            <person name="Kaul S."/>
            <person name="Rounsley S.D."/>
            <person name="Shea T.P."/>
            <person name="Benito M.-I."/>
            <person name="Town C.D."/>
            <person name="Fujii C.Y."/>
            <person name="Mason T.M."/>
            <person name="Bowman C.L."/>
            <person name="Barnstead M.E."/>
            <person name="Feldblyum T.V."/>
            <person name="Buell C.R."/>
            <person name="Ketchum K.A."/>
            <person name="Lee J.J."/>
            <person name="Ronning C.M."/>
            <person name="Koo H.L."/>
            <person name="Moffat K.S."/>
            <person name="Cronin L.A."/>
            <person name="Shen M."/>
            <person name="Pai G."/>
            <person name="Van Aken S."/>
            <person name="Umayam L."/>
            <person name="Tallon L.J."/>
            <person name="Gill J.E."/>
            <person name="Adams M.D."/>
            <person name="Carrera A.J."/>
            <person name="Creasy T.H."/>
            <person name="Goodman H.M."/>
            <person name="Somerville C.R."/>
            <person name="Copenhaver G.P."/>
            <person name="Preuss D."/>
            <person name="Nierman W.C."/>
            <person name="White O."/>
            <person name="Eisen J.A."/>
            <person name="Salzberg S.L."/>
            <person name="Fraser C.M."/>
            <person name="Venter J.C."/>
        </authorList>
    </citation>
    <scope>NUCLEOTIDE SEQUENCE [LARGE SCALE GENOMIC DNA]</scope>
    <source>
        <strain>cv. Columbia</strain>
    </source>
</reference>
<reference key="2">
    <citation type="journal article" date="2017" name="Plant J.">
        <title>Araport11: a complete reannotation of the Arabidopsis thaliana reference genome.</title>
        <authorList>
            <person name="Cheng C.Y."/>
            <person name="Krishnakumar V."/>
            <person name="Chan A.P."/>
            <person name="Thibaud-Nissen F."/>
            <person name="Schobel S."/>
            <person name="Town C.D."/>
        </authorList>
    </citation>
    <scope>GENOME REANNOTATION</scope>
    <source>
        <strain>cv. Columbia</strain>
    </source>
</reference>
<reference key="3">
    <citation type="journal article" date="2003" name="Science">
        <title>Empirical analysis of transcriptional activity in the Arabidopsis genome.</title>
        <authorList>
            <person name="Yamada K."/>
            <person name="Lim J."/>
            <person name="Dale J.M."/>
            <person name="Chen H."/>
            <person name="Shinn P."/>
            <person name="Palm C.J."/>
            <person name="Southwick A.M."/>
            <person name="Wu H.C."/>
            <person name="Kim C.J."/>
            <person name="Nguyen M."/>
            <person name="Pham P.K."/>
            <person name="Cheuk R.F."/>
            <person name="Karlin-Newmann G."/>
            <person name="Liu S.X."/>
            <person name="Lam B."/>
            <person name="Sakano H."/>
            <person name="Wu T."/>
            <person name="Yu G."/>
            <person name="Miranda M."/>
            <person name="Quach H.L."/>
            <person name="Tripp M."/>
            <person name="Chang C.H."/>
            <person name="Lee J.M."/>
            <person name="Toriumi M.J."/>
            <person name="Chan M.M."/>
            <person name="Tang C.C."/>
            <person name="Onodera C.S."/>
            <person name="Deng J.M."/>
            <person name="Akiyama K."/>
            <person name="Ansari Y."/>
            <person name="Arakawa T."/>
            <person name="Banh J."/>
            <person name="Banno F."/>
            <person name="Bowser L."/>
            <person name="Brooks S.Y."/>
            <person name="Carninci P."/>
            <person name="Chao Q."/>
            <person name="Choy N."/>
            <person name="Enju A."/>
            <person name="Goldsmith A.D."/>
            <person name="Gurjal M."/>
            <person name="Hansen N.F."/>
            <person name="Hayashizaki Y."/>
            <person name="Johnson-Hopson C."/>
            <person name="Hsuan V.W."/>
            <person name="Iida K."/>
            <person name="Karnes M."/>
            <person name="Khan S."/>
            <person name="Koesema E."/>
            <person name="Ishida J."/>
            <person name="Jiang P.X."/>
            <person name="Jones T."/>
            <person name="Kawai J."/>
            <person name="Kamiya A."/>
            <person name="Meyers C."/>
            <person name="Nakajima M."/>
            <person name="Narusaka M."/>
            <person name="Seki M."/>
            <person name="Sakurai T."/>
            <person name="Satou M."/>
            <person name="Tamse R."/>
            <person name="Vaysberg M."/>
            <person name="Wallender E.K."/>
            <person name="Wong C."/>
            <person name="Yamamura Y."/>
            <person name="Yuan S."/>
            <person name="Shinozaki K."/>
            <person name="Davis R.W."/>
            <person name="Theologis A."/>
            <person name="Ecker J.R."/>
        </authorList>
    </citation>
    <scope>NUCLEOTIDE SEQUENCE [LARGE SCALE MRNA]</scope>
    <source>
        <strain>cv. Columbia</strain>
    </source>
</reference>
<reference key="4">
    <citation type="journal article" date="2007" name="Mol. Cell. Proteomics">
        <title>A high content in lipid-modified peripheral proteins and integral receptor kinases features in the arabidopsis plasma membrane proteome.</title>
        <authorList>
            <person name="Marmagne A."/>
            <person name="Ferro M."/>
            <person name="Meinnel T."/>
            <person name="Bruley C."/>
            <person name="Kuhn L."/>
            <person name="Garin J."/>
            <person name="Barbier-Brygoo H."/>
            <person name="Ephritikhine G."/>
        </authorList>
    </citation>
    <scope>IDENTIFICATION BY MASS SPECTROMETRY</scope>
    <scope>SUBCELLULAR LOCATION [LARGE SCALE ANALYSIS]</scope>
</reference>
<reference key="5">
    <citation type="journal article" date="2009" name="Mol. Plant">
        <title>Diverse transcriptional programs associated with environmental stress and hormones in the Arabidopsis receptor-like kinase gene family.</title>
        <authorList>
            <person name="Chae L."/>
            <person name="Sudat S."/>
            <person name="Dudoit S."/>
            <person name="Zhu T."/>
            <person name="Luan S."/>
        </authorList>
    </citation>
    <scope>GENE FAMILY</scope>
</reference>